<gene>
    <name evidence="1" type="primary">galT</name>
</gene>
<dbReference type="EC" id="2.7.7.12" evidence="1"/>
<dbReference type="EMBL" id="AF389474">
    <property type="protein sequence ID" value="AAL67290.1"/>
    <property type="molecule type" value="Genomic_DNA"/>
</dbReference>
<dbReference type="RefSeq" id="WP_045772299.1">
    <property type="nucleotide sequence ID" value="NZ_WQNN01000007.1"/>
</dbReference>
<dbReference type="STRING" id="1304.HMPREF3219_0201406"/>
<dbReference type="UniPathway" id="UPA00214"/>
<dbReference type="GO" id="GO:0005737">
    <property type="term" value="C:cytoplasm"/>
    <property type="evidence" value="ECO:0007669"/>
    <property type="project" value="UniProtKB-SubCell"/>
</dbReference>
<dbReference type="GO" id="GO:0008108">
    <property type="term" value="F:UDP-glucose:hexose-1-phosphate uridylyltransferase activity"/>
    <property type="evidence" value="ECO:0007669"/>
    <property type="project" value="UniProtKB-UniRule"/>
</dbReference>
<dbReference type="GO" id="GO:0006012">
    <property type="term" value="P:galactose metabolic process"/>
    <property type="evidence" value="ECO:0007669"/>
    <property type="project" value="UniProtKB-UniRule"/>
</dbReference>
<dbReference type="HAMAP" id="MF_00571">
    <property type="entry name" value="GalP_UDP_trans"/>
    <property type="match status" value="1"/>
</dbReference>
<dbReference type="InterPro" id="IPR000766">
    <property type="entry name" value="GalP_uridyl_Trfase_II"/>
</dbReference>
<dbReference type="InterPro" id="IPR023425">
    <property type="entry name" value="GalP_uridyl_Trfase_II_CS"/>
</dbReference>
<dbReference type="InterPro" id="IPR005850">
    <property type="entry name" value="GalP_Utransf_C"/>
</dbReference>
<dbReference type="InterPro" id="IPR005849">
    <property type="entry name" value="GalP_Utransf_N"/>
</dbReference>
<dbReference type="NCBIfam" id="TIGR01239">
    <property type="entry name" value="galT_2"/>
    <property type="match status" value="1"/>
</dbReference>
<dbReference type="NCBIfam" id="NF003629">
    <property type="entry name" value="PRK05270.1-2"/>
    <property type="match status" value="1"/>
</dbReference>
<dbReference type="NCBIfam" id="NF003631">
    <property type="entry name" value="PRK05270.1-5"/>
    <property type="match status" value="1"/>
</dbReference>
<dbReference type="NCBIfam" id="NF003633">
    <property type="entry name" value="PRK05270.2-2"/>
    <property type="match status" value="1"/>
</dbReference>
<dbReference type="PANTHER" id="PTHR39191:SF1">
    <property type="entry name" value="DUF4922 DOMAIN-CONTAINING PROTEIN"/>
    <property type="match status" value="1"/>
</dbReference>
<dbReference type="PANTHER" id="PTHR39191">
    <property type="entry name" value="GALACTOSE-1-PHOSPHATE URIDYLYLTRANSFERASE"/>
    <property type="match status" value="1"/>
</dbReference>
<dbReference type="Pfam" id="PF02744">
    <property type="entry name" value="GalP_UDP_tr_C"/>
    <property type="match status" value="1"/>
</dbReference>
<dbReference type="Pfam" id="PF01087">
    <property type="entry name" value="GalP_UDP_transf"/>
    <property type="match status" value="1"/>
</dbReference>
<dbReference type="PIRSF" id="PIRSF006005">
    <property type="entry name" value="GalT_BS"/>
    <property type="match status" value="1"/>
</dbReference>
<dbReference type="PROSITE" id="PS01163">
    <property type="entry name" value="GAL_P_UDP_TRANSF_II"/>
    <property type="match status" value="1"/>
</dbReference>
<keyword id="KW-0119">Carbohydrate metabolism</keyword>
<keyword id="KW-0963">Cytoplasm</keyword>
<keyword id="KW-0299">Galactose metabolism</keyword>
<keyword id="KW-0548">Nucleotidyltransferase</keyword>
<keyword id="KW-0808">Transferase</keyword>
<reference key="1">
    <citation type="journal article" date="2002" name="J. Bacteriol.">
        <title>Galactose and lactose genes from the galactose-positive bacterium Streptococcus salivarius and the phylogenetically related galactose-negative bacterium Streptococcus thermophilus: organization, sequence, transcription, and activity of the gal gene products.</title>
        <authorList>
            <person name="Vaillancourt K."/>
            <person name="Moineau S."/>
            <person name="Frenette M."/>
            <person name="Lessard C."/>
            <person name="Vadeboncoeur C."/>
        </authorList>
    </citation>
    <scope>NUCLEOTIDE SEQUENCE [GENOMIC DNA]</scope>
    <source>
        <strain>ATCC 25975</strain>
    </source>
</reference>
<proteinExistence type="inferred from homology"/>
<evidence type="ECO:0000255" key="1">
    <source>
        <dbReference type="HAMAP-Rule" id="MF_00571"/>
    </source>
</evidence>
<organism>
    <name type="scientific">Streptococcus salivarius</name>
    <dbReference type="NCBI Taxonomy" id="1304"/>
    <lineage>
        <taxon>Bacteria</taxon>
        <taxon>Bacillati</taxon>
        <taxon>Bacillota</taxon>
        <taxon>Bacilli</taxon>
        <taxon>Lactobacillales</taxon>
        <taxon>Streptococcaceae</taxon>
        <taxon>Streptococcus</taxon>
    </lineage>
</organism>
<name>GALT_STRSL</name>
<sequence>MAENLVNAFVTLVIENSDYEELDRIYLTNKVFALVGEGVADVETESSELIDLKDQLLQAGVKAGSVGELNEEQDIIGAQLMDLITPSPSAVNRNFWDTYKSNPEQAIADFYVQSKRNDYVKVKAIAQNIAYKAPTKYGDLEITINLSKPEKDPKAIAAAKNAVASDYPKCQLCMENEGYLGRINHPARSNHRVIRFQMEGNDWGFQYSPYAYFNEHSIFFYGKHEPMHISPLTFGRLLSIVEAFPGYFAGSNADLPIVGGSILTHEHYQGGRHTFPMEVAGIKEKVSFDGYSDVETGIVNWPMSVLRLRSEDKERLIALATKILNCWRGYSDEKAGVLAQSDGHPHHTITPIARRKDGKFELDLVLRDNQTSEEHPDGIYHPHKDVQHIKKENIGLIEVMGLAILPPRLKTELKDVEDYLLGQGNQVAPIHQEWADELKAQNPNVTAEEVTEVVRQSVADIFARVLEDAGVYKTNSEGLDQFKAFVDFVNLAD</sequence>
<comment type="catalytic activity">
    <reaction evidence="1">
        <text>alpha-D-galactose 1-phosphate + UDP-alpha-D-glucose = alpha-D-glucose 1-phosphate + UDP-alpha-D-galactose</text>
        <dbReference type="Rhea" id="RHEA:13989"/>
        <dbReference type="ChEBI" id="CHEBI:58336"/>
        <dbReference type="ChEBI" id="CHEBI:58601"/>
        <dbReference type="ChEBI" id="CHEBI:58885"/>
        <dbReference type="ChEBI" id="CHEBI:66914"/>
        <dbReference type="EC" id="2.7.7.12"/>
    </reaction>
</comment>
<comment type="pathway">
    <text evidence="1">Carbohydrate metabolism; galactose metabolism.</text>
</comment>
<comment type="subcellular location">
    <subcellularLocation>
        <location evidence="1">Cytoplasm</location>
    </subcellularLocation>
</comment>
<comment type="similarity">
    <text evidence="1">Belongs to the galactose-1-phosphate uridylyltransferase type 2 family.</text>
</comment>
<accession>Q8VS92</accession>
<feature type="chain" id="PRO_0000169918" description="Galactose-1-phosphate uridylyltransferase">
    <location>
        <begin position="1"/>
        <end position="493"/>
    </location>
</feature>
<protein>
    <recommendedName>
        <fullName evidence="1">Galactose-1-phosphate uridylyltransferase</fullName>
        <shortName evidence="1">Gal-1-P uridylyltransferase</shortName>
        <ecNumber evidence="1">2.7.7.12</ecNumber>
    </recommendedName>
    <alternativeName>
        <fullName evidence="1">UDP-glucose--hexose-1-phosphate uridylyltransferase</fullName>
    </alternativeName>
</protein>